<evidence type="ECO:0000250" key="1"/>
<evidence type="ECO:0000250" key="2">
    <source>
        <dbReference type="UniProtKB" id="P14137"/>
    </source>
</evidence>
<evidence type="ECO:0000250" key="3">
    <source>
        <dbReference type="UniProtKB" id="P15393"/>
    </source>
</evidence>
<evidence type="ECO:0000250" key="4">
    <source>
        <dbReference type="UniProtKB" id="P15538"/>
    </source>
</evidence>
<evidence type="ECO:0000250" key="5">
    <source>
        <dbReference type="UniProtKB" id="P19099"/>
    </source>
</evidence>
<evidence type="ECO:0000305" key="6"/>
<reference key="1">
    <citation type="journal article" date="1996" name="Endocr. Res.">
        <title>Sequence of the 11 beta-hydroxylase gene from the Cape baboon (Papio ursinus).</title>
        <authorList>
            <person name="Hampf M."/>
            <person name="Swart A.C."/>
            <person name="Swart P."/>
        </authorList>
    </citation>
    <scope>NUCLEOTIDE SEQUENCE [GENOMIC DNA]</scope>
    <source>
        <tissue>Blood</tissue>
    </source>
</reference>
<gene>
    <name type="primary">CYP11B1</name>
</gene>
<name>C11B1_PAPHU</name>
<keyword id="KW-0349">Heme</keyword>
<keyword id="KW-0408">Iron</keyword>
<keyword id="KW-0472">Membrane</keyword>
<keyword id="KW-0479">Metal-binding</keyword>
<keyword id="KW-0496">Mitochondrion</keyword>
<keyword id="KW-0999">Mitochondrion inner membrane</keyword>
<keyword id="KW-0503">Monooxygenase</keyword>
<keyword id="KW-0560">Oxidoreductase</keyword>
<keyword id="KW-0755">Steroidogenesis</keyword>
<keyword id="KW-0809">Transit peptide</keyword>
<organism>
    <name type="scientific">Papio hamadryas ursinus</name>
    <name type="common">Chacma baboon</name>
    <dbReference type="NCBI Taxonomy" id="36229"/>
    <lineage>
        <taxon>Eukaryota</taxon>
        <taxon>Metazoa</taxon>
        <taxon>Chordata</taxon>
        <taxon>Craniata</taxon>
        <taxon>Vertebrata</taxon>
        <taxon>Euteleostomi</taxon>
        <taxon>Mammalia</taxon>
        <taxon>Eutheria</taxon>
        <taxon>Euarchontoglires</taxon>
        <taxon>Primates</taxon>
        <taxon>Haplorrhini</taxon>
        <taxon>Catarrhini</taxon>
        <taxon>Cercopithecidae</taxon>
        <taxon>Cercopithecinae</taxon>
        <taxon>Papio</taxon>
    </lineage>
</organism>
<feature type="transit peptide" description="Mitochondrion" evidence="1">
    <location>
        <begin position="1"/>
        <end position="24"/>
    </location>
</feature>
<feature type="chain" id="PRO_0000003601" description="Cytochrome P450 11B1, mitochondrial">
    <location>
        <begin position="25"/>
        <end position="503"/>
    </location>
</feature>
<feature type="binding site" description="axial binding residue" evidence="5">
    <location>
        <position position="450"/>
    </location>
    <ligand>
        <name>heme</name>
        <dbReference type="ChEBI" id="CHEBI:30413"/>
    </ligand>
    <ligandPart>
        <name>Fe</name>
        <dbReference type="ChEBI" id="CHEBI:18248"/>
    </ligandPart>
</feature>
<sequence length="503" mass="57644">MALRAKAEVCMAAPWLSLQRARALGTRATRVPRTVLPFEAMPRRPGNRWLRLLQIWREQGYEHLHLEVHQTFQELGPIFRYDLGGAGMVCVMLPEDVEKLQQVDSLNPRRMSLEPWVAYRQHRGHKCGVFLLNGPEWRFNRLRLNPDVLSPKAVQRFLPMVDAVARDFSQALRKKVVQNARESVTLDIQPSIFHYTIEASNLALFGERLGLVGHSPSSASLSFLHALEVMFKSTVQLMFMPRSLSRWTSPKVWKEHFEAWDCIFQYGDNCIQKIYQELALSRPQQYTSIVAELLLNAELSPDAIKANSMELTAGSVDTTVFPLLMTLFELARNPNVQQALRQESLAAAASISEHPQKATTELPLLRAALKETLRLYPVGLFLERVVSSDLVLQNYHIPAGTLVRVFLYSLGRNPALFPRPERYNPQRWLDIRGSGRNFYHVPFGFGMRQCLGRRLAEAEMLLLLHHVLKHLQVETLTQEDIKMVYSFILRPSTFPLLTFRAIN</sequence>
<proteinExistence type="inferred from homology"/>
<comment type="function">
    <text evidence="3 4">A cytochrome P450 monooxygenase involved in the biosynthesis of adrenal corticoids (By similarity). Catalyzes a variety of reactions that are essential for many species, including detoxification, defense, and the formation of endogenous chemicals like steroid hormones (By similarity). Steroid 11beta, 18- and 19-hydroxylase with preferred regioselectivity at 11beta, then 18, and lastly 19. Catalyzes the hydroxylation of 11-deoxycortisol and 11-deoxycorticosterone (21-hydroxyprogesterone) at 11beta position, yielding cortisol or corticosterone, respectively, but cannot produce aldosterone (By similarity). Mechanistically, uses molecular oxygen inserting one oxygen atom into a substrate for hydroxylation and reducing the second into a water molecule. Two electrons are provided by NADPH via a two-protein mitochondrial transfer system comprising flavoprotein FDXR (adrenodoxin/ferredoxin reductase) and nonheme iron-sulfur protein FDX1 or FDX2 (adrenodoxin/ferredoxin). Due to its lack of 18-oxidation activity, it is incapable of generating aldosterone. Could also be involved in the androgen metabolic pathway (By similarity).</text>
</comment>
<comment type="catalytic activity">
    <reaction evidence="4">
        <text>a steroid + 2 reduced [adrenodoxin] + O2 + 2 H(+) = an 11beta-hydroxysteroid + 2 oxidized [adrenodoxin] + H2O</text>
        <dbReference type="Rhea" id="RHEA:15629"/>
        <dbReference type="Rhea" id="RHEA-COMP:9998"/>
        <dbReference type="Rhea" id="RHEA-COMP:9999"/>
        <dbReference type="ChEBI" id="CHEBI:15377"/>
        <dbReference type="ChEBI" id="CHEBI:15378"/>
        <dbReference type="ChEBI" id="CHEBI:15379"/>
        <dbReference type="ChEBI" id="CHEBI:33737"/>
        <dbReference type="ChEBI" id="CHEBI:33738"/>
        <dbReference type="ChEBI" id="CHEBI:35341"/>
        <dbReference type="ChEBI" id="CHEBI:35346"/>
        <dbReference type="EC" id="1.14.15.4"/>
    </reaction>
    <physiologicalReaction direction="left-to-right" evidence="4">
        <dbReference type="Rhea" id="RHEA:15630"/>
    </physiologicalReaction>
</comment>
<comment type="catalytic activity">
    <reaction evidence="4">
        <text>11-deoxycortisol + 2 reduced [adrenodoxin] + O2 + 2 H(+) = cortisol + 2 oxidized [adrenodoxin] + H2O</text>
        <dbReference type="Rhea" id="RHEA:46100"/>
        <dbReference type="Rhea" id="RHEA-COMP:9998"/>
        <dbReference type="Rhea" id="RHEA-COMP:9999"/>
        <dbReference type="ChEBI" id="CHEBI:15377"/>
        <dbReference type="ChEBI" id="CHEBI:15378"/>
        <dbReference type="ChEBI" id="CHEBI:15379"/>
        <dbReference type="ChEBI" id="CHEBI:17650"/>
        <dbReference type="ChEBI" id="CHEBI:28324"/>
        <dbReference type="ChEBI" id="CHEBI:33737"/>
        <dbReference type="ChEBI" id="CHEBI:33738"/>
    </reaction>
    <physiologicalReaction direction="left-to-right" evidence="4">
        <dbReference type="Rhea" id="RHEA:46101"/>
    </physiologicalReaction>
</comment>
<comment type="catalytic activity">
    <reaction evidence="4">
        <text>21-hydroxyprogesterone + 2 reduced [adrenodoxin] + O2 + 2 H(+) = corticosterone + 2 oxidized [adrenodoxin] + H2O</text>
        <dbReference type="Rhea" id="RHEA:46104"/>
        <dbReference type="Rhea" id="RHEA-COMP:9998"/>
        <dbReference type="Rhea" id="RHEA-COMP:9999"/>
        <dbReference type="ChEBI" id="CHEBI:15377"/>
        <dbReference type="ChEBI" id="CHEBI:15378"/>
        <dbReference type="ChEBI" id="CHEBI:15379"/>
        <dbReference type="ChEBI" id="CHEBI:16827"/>
        <dbReference type="ChEBI" id="CHEBI:16973"/>
        <dbReference type="ChEBI" id="CHEBI:33737"/>
        <dbReference type="ChEBI" id="CHEBI:33738"/>
    </reaction>
    <physiologicalReaction direction="left-to-right" evidence="4">
        <dbReference type="Rhea" id="RHEA:46105"/>
    </physiologicalReaction>
</comment>
<comment type="catalytic activity">
    <reaction evidence="3">
        <text>21-hydroxyprogesterone + 2 reduced [adrenodoxin] + O2 + 2 H(+) = 18-hydroxy-11-deoxycorticosterone + 2 oxidized [adrenodoxin] + H2O</text>
        <dbReference type="Rhea" id="RHEA:76151"/>
        <dbReference type="Rhea" id="RHEA-COMP:9998"/>
        <dbReference type="Rhea" id="RHEA-COMP:9999"/>
        <dbReference type="ChEBI" id="CHEBI:15377"/>
        <dbReference type="ChEBI" id="CHEBI:15378"/>
        <dbReference type="ChEBI" id="CHEBI:15379"/>
        <dbReference type="ChEBI" id="CHEBI:16973"/>
        <dbReference type="ChEBI" id="CHEBI:33737"/>
        <dbReference type="ChEBI" id="CHEBI:33738"/>
        <dbReference type="ChEBI" id="CHEBI:195166"/>
    </reaction>
    <physiologicalReaction direction="left-to-right" evidence="3">
        <dbReference type="Rhea" id="RHEA:76152"/>
    </physiologicalReaction>
</comment>
<comment type="catalytic activity">
    <reaction evidence="3">
        <text>21-hydroxyprogesterone + 2 reduced [adrenodoxin] + O2 + 2 H(+) = 19-hydroxy-11-deoxycorticosterone + 2 oxidized [adrenodoxin] + H2O</text>
        <dbReference type="Rhea" id="RHEA:76155"/>
        <dbReference type="Rhea" id="RHEA-COMP:9998"/>
        <dbReference type="Rhea" id="RHEA-COMP:9999"/>
        <dbReference type="ChEBI" id="CHEBI:15377"/>
        <dbReference type="ChEBI" id="CHEBI:15378"/>
        <dbReference type="ChEBI" id="CHEBI:15379"/>
        <dbReference type="ChEBI" id="CHEBI:16973"/>
        <dbReference type="ChEBI" id="CHEBI:33737"/>
        <dbReference type="ChEBI" id="CHEBI:33738"/>
        <dbReference type="ChEBI" id="CHEBI:195167"/>
    </reaction>
    <physiologicalReaction direction="left-to-right" evidence="3">
        <dbReference type="Rhea" id="RHEA:76156"/>
    </physiologicalReaction>
</comment>
<comment type="catalytic activity">
    <reaction evidence="3">
        <text>cortisol + 2 reduced [adrenodoxin] + O2 + 2 H(+) = 18-hydroxycortisol + 2 oxidized [adrenodoxin] + H2O</text>
        <dbReference type="Rhea" id="RHEA:76019"/>
        <dbReference type="Rhea" id="RHEA-COMP:9998"/>
        <dbReference type="Rhea" id="RHEA-COMP:9999"/>
        <dbReference type="ChEBI" id="CHEBI:15377"/>
        <dbReference type="ChEBI" id="CHEBI:15378"/>
        <dbReference type="ChEBI" id="CHEBI:15379"/>
        <dbReference type="ChEBI" id="CHEBI:17650"/>
        <dbReference type="ChEBI" id="CHEBI:33737"/>
        <dbReference type="ChEBI" id="CHEBI:33738"/>
        <dbReference type="ChEBI" id="CHEBI:89455"/>
    </reaction>
    <physiologicalReaction direction="left-to-right" evidence="3">
        <dbReference type="Rhea" id="RHEA:76020"/>
    </physiologicalReaction>
</comment>
<comment type="catalytic activity">
    <reaction evidence="3">
        <text>11-deoxycortisol + 2 reduced [adrenodoxin] + O2 + 2 H(+) = 18-hydroxy-11-deoxycortisol + 2 oxidized [adrenodoxin] + H2O</text>
        <dbReference type="Rhea" id="RHEA:76163"/>
        <dbReference type="Rhea" id="RHEA-COMP:9998"/>
        <dbReference type="Rhea" id="RHEA-COMP:9999"/>
        <dbReference type="ChEBI" id="CHEBI:15377"/>
        <dbReference type="ChEBI" id="CHEBI:15378"/>
        <dbReference type="ChEBI" id="CHEBI:15379"/>
        <dbReference type="ChEBI" id="CHEBI:28324"/>
        <dbReference type="ChEBI" id="CHEBI:33737"/>
        <dbReference type="ChEBI" id="CHEBI:33738"/>
        <dbReference type="ChEBI" id="CHEBI:195179"/>
    </reaction>
    <physiologicalReaction direction="left-to-right" evidence="3">
        <dbReference type="Rhea" id="RHEA:76164"/>
    </physiologicalReaction>
</comment>
<comment type="cofactor">
    <cofactor evidence="5">
        <name>heme</name>
        <dbReference type="ChEBI" id="CHEBI:30413"/>
    </cofactor>
</comment>
<comment type="pathway">
    <text evidence="4">Steroid biosynthesis; glucocorticoid biosynthesis.</text>
</comment>
<comment type="pathway">
    <text evidence="4">Steroid hormone biosynthesis.</text>
</comment>
<comment type="subcellular location">
    <subcellularLocation>
        <location evidence="2">Mitochondrion inner membrane</location>
        <topology evidence="2">Peripheral membrane protein</topology>
    </subcellularLocation>
</comment>
<comment type="similarity">
    <text evidence="6">Belongs to the cytochrome P450 family.</text>
</comment>
<protein>
    <recommendedName>
        <fullName>Cytochrome P450 11B1, mitochondrial</fullName>
    </recommendedName>
    <alternativeName>
        <fullName>CYPXIB1</fullName>
    </alternativeName>
    <alternativeName>
        <fullName>Cytochrome P450C11</fullName>
    </alternativeName>
    <alternativeName>
        <fullName evidence="4">Steroid 11-beta-hydroxylase, CYP11B1</fullName>
        <ecNumber evidence="4">1.14.15.4</ecNumber>
    </alternativeName>
</protein>
<accession>Q29527</accession>
<dbReference type="EC" id="1.14.15.4" evidence="4"/>
<dbReference type="EMBL" id="U52085">
    <property type="protein sequence ID" value="AAA96967.1"/>
    <property type="molecule type" value="Genomic_DNA"/>
</dbReference>
<dbReference type="EMBL" id="U52081">
    <property type="protein sequence ID" value="AAA96967.1"/>
    <property type="status" value="JOINED"/>
    <property type="molecule type" value="Genomic_DNA"/>
</dbReference>
<dbReference type="EMBL" id="U52082">
    <property type="protein sequence ID" value="AAA96967.1"/>
    <property type="status" value="JOINED"/>
    <property type="molecule type" value="Genomic_DNA"/>
</dbReference>
<dbReference type="EMBL" id="U52083">
    <property type="protein sequence ID" value="AAA96967.1"/>
    <property type="status" value="JOINED"/>
    <property type="molecule type" value="Genomic_DNA"/>
</dbReference>
<dbReference type="EMBL" id="U52084">
    <property type="protein sequence ID" value="AAA96967.1"/>
    <property type="status" value="JOINED"/>
    <property type="molecule type" value="Genomic_DNA"/>
</dbReference>
<dbReference type="SMR" id="Q29527"/>
<dbReference type="UniPathway" id="UPA00788"/>
<dbReference type="GO" id="GO:0005743">
    <property type="term" value="C:mitochondrial inner membrane"/>
    <property type="evidence" value="ECO:0007669"/>
    <property type="project" value="UniProtKB-SubCell"/>
</dbReference>
<dbReference type="GO" id="GO:0047783">
    <property type="term" value="F:corticosterone 18-monooxygenase activity"/>
    <property type="evidence" value="ECO:0007669"/>
    <property type="project" value="TreeGrafter"/>
</dbReference>
<dbReference type="GO" id="GO:0020037">
    <property type="term" value="F:heme binding"/>
    <property type="evidence" value="ECO:0007669"/>
    <property type="project" value="InterPro"/>
</dbReference>
<dbReference type="GO" id="GO:0005506">
    <property type="term" value="F:iron ion binding"/>
    <property type="evidence" value="ECO:0007669"/>
    <property type="project" value="InterPro"/>
</dbReference>
<dbReference type="GO" id="GO:0004507">
    <property type="term" value="F:steroid 11-beta-monooxygenase activity"/>
    <property type="evidence" value="ECO:0007669"/>
    <property type="project" value="UniProtKB-EC"/>
</dbReference>
<dbReference type="GO" id="GO:0032342">
    <property type="term" value="P:aldosterone biosynthetic process"/>
    <property type="evidence" value="ECO:0007669"/>
    <property type="project" value="TreeGrafter"/>
</dbReference>
<dbReference type="GO" id="GO:0071375">
    <property type="term" value="P:cellular response to peptide hormone stimulus"/>
    <property type="evidence" value="ECO:0007669"/>
    <property type="project" value="TreeGrafter"/>
</dbReference>
<dbReference type="GO" id="GO:0008203">
    <property type="term" value="P:cholesterol metabolic process"/>
    <property type="evidence" value="ECO:0007669"/>
    <property type="project" value="TreeGrafter"/>
</dbReference>
<dbReference type="GO" id="GO:0034650">
    <property type="term" value="P:cortisol metabolic process"/>
    <property type="evidence" value="ECO:0007669"/>
    <property type="project" value="TreeGrafter"/>
</dbReference>
<dbReference type="GO" id="GO:0006704">
    <property type="term" value="P:glucocorticoid biosynthetic process"/>
    <property type="evidence" value="ECO:0007669"/>
    <property type="project" value="UniProtKB-UniPathway"/>
</dbReference>
<dbReference type="CDD" id="cd20644">
    <property type="entry name" value="CYP11B"/>
    <property type="match status" value="1"/>
</dbReference>
<dbReference type="FunFam" id="1.10.630.10:FF:000015">
    <property type="entry name" value="Cholesterol side-chain cleavage enzyme, mitochondrial"/>
    <property type="match status" value="1"/>
</dbReference>
<dbReference type="Gene3D" id="1.10.630.10">
    <property type="entry name" value="Cytochrome P450"/>
    <property type="match status" value="1"/>
</dbReference>
<dbReference type="InterPro" id="IPR050479">
    <property type="entry name" value="CYP11_CYP27_families"/>
</dbReference>
<dbReference type="InterPro" id="IPR001128">
    <property type="entry name" value="Cyt_P450"/>
</dbReference>
<dbReference type="InterPro" id="IPR017972">
    <property type="entry name" value="Cyt_P450_CS"/>
</dbReference>
<dbReference type="InterPro" id="IPR002399">
    <property type="entry name" value="Cyt_P450_mitochondrial"/>
</dbReference>
<dbReference type="InterPro" id="IPR036396">
    <property type="entry name" value="Cyt_P450_sf"/>
</dbReference>
<dbReference type="PANTHER" id="PTHR24279">
    <property type="entry name" value="CYTOCHROME P450"/>
    <property type="match status" value="1"/>
</dbReference>
<dbReference type="PANTHER" id="PTHR24279:SF115">
    <property type="entry name" value="CYTOCHROME P450 11B1, MITOCHONDRIAL"/>
    <property type="match status" value="1"/>
</dbReference>
<dbReference type="Pfam" id="PF00067">
    <property type="entry name" value="p450"/>
    <property type="match status" value="1"/>
</dbReference>
<dbReference type="PRINTS" id="PR00408">
    <property type="entry name" value="MITP450"/>
</dbReference>
<dbReference type="PRINTS" id="PR00385">
    <property type="entry name" value="P450"/>
</dbReference>
<dbReference type="SUPFAM" id="SSF48264">
    <property type="entry name" value="Cytochrome P450"/>
    <property type="match status" value="1"/>
</dbReference>
<dbReference type="PROSITE" id="PS00086">
    <property type="entry name" value="CYTOCHROME_P450"/>
    <property type="match status" value="1"/>
</dbReference>